<protein>
    <recommendedName>
        <fullName>Serpentine receptor class delta-50</fullName>
        <shortName>Protein srd-50</shortName>
    </recommendedName>
</protein>
<evidence type="ECO:0000255" key="1"/>
<evidence type="ECO:0000305" key="2"/>
<evidence type="ECO:0000312" key="3">
    <source>
        <dbReference type="WormBase" id="F15A2.4"/>
    </source>
</evidence>
<organism>
    <name type="scientific">Caenorhabditis elegans</name>
    <dbReference type="NCBI Taxonomy" id="6239"/>
    <lineage>
        <taxon>Eukaryota</taxon>
        <taxon>Metazoa</taxon>
        <taxon>Ecdysozoa</taxon>
        <taxon>Nematoda</taxon>
        <taxon>Chromadorea</taxon>
        <taxon>Rhabditida</taxon>
        <taxon>Rhabditina</taxon>
        <taxon>Rhabditomorpha</taxon>
        <taxon>Rhabditoidea</taxon>
        <taxon>Rhabditidae</taxon>
        <taxon>Peloderinae</taxon>
        <taxon>Caenorhabditis</taxon>
    </lineage>
</organism>
<dbReference type="EMBL" id="Z70207">
    <property type="protein sequence ID" value="CAA94133.2"/>
    <property type="molecule type" value="Genomic_DNA"/>
</dbReference>
<dbReference type="PIR" id="T20947">
    <property type="entry name" value="T20947"/>
</dbReference>
<dbReference type="RefSeq" id="NP_001309446.1">
    <property type="nucleotide sequence ID" value="NM_001322645.1"/>
</dbReference>
<dbReference type="SMR" id="Q19474"/>
<dbReference type="FunCoup" id="Q19474">
    <property type="interactions" value="14"/>
</dbReference>
<dbReference type="PaxDb" id="6239-F15A2.4"/>
<dbReference type="EnsemblMetazoa" id="F15A2.4.1">
    <property type="protein sequence ID" value="F15A2.4.1"/>
    <property type="gene ID" value="WBGene00005128"/>
</dbReference>
<dbReference type="GeneID" id="184507"/>
<dbReference type="KEGG" id="cel:CELE_F15A2.4"/>
<dbReference type="UCSC" id="F15A2.4">
    <property type="organism name" value="c. elegans"/>
</dbReference>
<dbReference type="AGR" id="WB:WBGene00005128"/>
<dbReference type="CTD" id="184507"/>
<dbReference type="WormBase" id="F15A2.4">
    <property type="protein sequence ID" value="CE51300"/>
    <property type="gene ID" value="WBGene00005128"/>
    <property type="gene designation" value="srd-50"/>
</dbReference>
<dbReference type="eggNOG" id="ENOG502TFJS">
    <property type="taxonomic scope" value="Eukaryota"/>
</dbReference>
<dbReference type="GeneTree" id="ENSGT00970000195825"/>
<dbReference type="HOGENOM" id="CLU_057924_2_0_1"/>
<dbReference type="InParanoid" id="Q19474"/>
<dbReference type="OMA" id="IIAFYYR"/>
<dbReference type="OrthoDB" id="5842578at2759"/>
<dbReference type="PhylomeDB" id="Q19474"/>
<dbReference type="PRO" id="PR:Q19474"/>
<dbReference type="Proteomes" id="UP000001940">
    <property type="component" value="Chromosome X"/>
</dbReference>
<dbReference type="GO" id="GO:0016020">
    <property type="term" value="C:membrane"/>
    <property type="evidence" value="ECO:0007669"/>
    <property type="project" value="UniProtKB-SubCell"/>
</dbReference>
<dbReference type="Gene3D" id="1.20.1070.10">
    <property type="entry name" value="Rhodopsin 7-helix transmembrane proteins"/>
    <property type="match status" value="1"/>
</dbReference>
<dbReference type="InterPro" id="IPR019421">
    <property type="entry name" value="7TM_GPCR_serpentine_rcpt_Srd"/>
</dbReference>
<dbReference type="InterPro" id="IPR050920">
    <property type="entry name" value="Nematode_rcpt-like_delta"/>
</dbReference>
<dbReference type="PANTHER" id="PTHR22945:SF91">
    <property type="entry name" value="SERPENTINE RECEPTOR CLASS DELTA-50"/>
    <property type="match status" value="1"/>
</dbReference>
<dbReference type="PANTHER" id="PTHR22945">
    <property type="entry name" value="SERPENTINE RECEPTOR, CLASS D DELTA"/>
    <property type="match status" value="1"/>
</dbReference>
<dbReference type="Pfam" id="PF10317">
    <property type="entry name" value="7TM_GPCR_Srd"/>
    <property type="match status" value="1"/>
</dbReference>
<dbReference type="SUPFAM" id="SSF81321">
    <property type="entry name" value="Family A G protein-coupled receptor-like"/>
    <property type="match status" value="1"/>
</dbReference>
<sequence length="337" mass="38483">MMSAMETNMVLILTIFYNAYFLLAISSQLLLLYLMLKCQNRSLHEMRIYLFNILGLQFISTFSAFVLQCRLKRVTLKHFCRIVPSSGTVAMLCYGPCKYLGNIVCEVLFHILQTSLIACATALIIAFYYRYEMLTNNSFTRSGHYKQLVISYCVPLVFLICEVLSPNDVNKLVAELTVLHPTYGLENYAILGFSDVKTVAASSQTLMLMIGLYGTPFIALVFRKKIIKILHSSRSYHAEKIVQTKSMIQGLTLQTLLPLICYCPGFTYYIYSQYTQSSSLFVEFAVSPYGFVYTIFDPLLTIYYVLPYRRTFKAIFSKHNSTTSATFVHSETARRVA</sequence>
<keyword id="KW-0472">Membrane</keyword>
<keyword id="KW-1185">Reference proteome</keyword>
<keyword id="KW-0812">Transmembrane</keyword>
<keyword id="KW-1133">Transmembrane helix</keyword>
<comment type="subcellular location">
    <subcellularLocation>
        <location evidence="2">Membrane</location>
        <topology evidence="2">Multi-pass membrane protein</topology>
    </subcellularLocation>
</comment>
<comment type="similarity">
    <text evidence="2">Belongs to the nematode receptor-like protein srd family.</text>
</comment>
<proteinExistence type="inferred from homology"/>
<feature type="chain" id="PRO_0000104529" description="Serpentine receptor class delta-50">
    <location>
        <begin position="1"/>
        <end position="337"/>
    </location>
</feature>
<feature type="transmembrane region" description="Helical" evidence="1">
    <location>
        <begin position="10"/>
        <end position="30"/>
    </location>
</feature>
<feature type="transmembrane region" description="Helical" evidence="1">
    <location>
        <begin position="48"/>
        <end position="68"/>
    </location>
</feature>
<feature type="transmembrane region" description="Helical" evidence="1">
    <location>
        <begin position="107"/>
        <end position="127"/>
    </location>
</feature>
<feature type="transmembrane region" description="Helical" evidence="1">
    <location>
        <begin position="147"/>
        <end position="167"/>
    </location>
</feature>
<feature type="transmembrane region" description="Helical" evidence="1">
    <location>
        <begin position="202"/>
        <end position="222"/>
    </location>
</feature>
<feature type="transmembrane region" description="Helical" evidence="1">
    <location>
        <begin position="250"/>
        <end position="270"/>
    </location>
</feature>
<feature type="transmembrane region" description="Helical" evidence="1">
    <location>
        <begin position="280"/>
        <end position="300"/>
    </location>
</feature>
<name>SRD50_CAEEL</name>
<gene>
    <name evidence="3" type="primary">srd-50</name>
    <name evidence="3" type="ORF">F15A2.4</name>
</gene>
<reference key="1">
    <citation type="journal article" date="1998" name="Science">
        <title>Genome sequence of the nematode C. elegans: a platform for investigating biology.</title>
        <authorList>
            <consortium name="The C. elegans sequencing consortium"/>
        </authorList>
    </citation>
    <scope>NUCLEOTIDE SEQUENCE [LARGE SCALE GENOMIC DNA]</scope>
    <source>
        <strain>Bristol N2</strain>
    </source>
</reference>
<accession>Q19474</accession>